<organismHost>
    <name type="scientific">Aves</name>
    <dbReference type="NCBI Taxonomy" id="8782"/>
</organismHost>
<sequence>MEQGQDTPWTQSTEHINIQKRGNGQQTQKLGRPNLTQLMDHYLRIMNQVDMHKQTASWKQWLSLKNPTQESLKTRVLKRWKLSNKQGWTN</sequence>
<accession>Q0A450</accession>
<organism>
    <name type="scientific">Influenza A virus (strain A/Turkey/Wisconsin/1/1966 H9N2)</name>
    <dbReference type="NCBI Taxonomy" id="385620"/>
    <lineage>
        <taxon>Viruses</taxon>
        <taxon>Riboviria</taxon>
        <taxon>Orthornavirae</taxon>
        <taxon>Negarnaviricota</taxon>
        <taxon>Polyploviricotina</taxon>
        <taxon>Insthoviricetes</taxon>
        <taxon>Articulavirales</taxon>
        <taxon>Orthomyxoviridae</taxon>
        <taxon>Alphainfluenzavirus</taxon>
        <taxon>Alphainfluenzavirus influenzae</taxon>
        <taxon>Influenza A virus</taxon>
    </lineage>
</organism>
<proteinExistence type="inferred from homology"/>
<feature type="chain" id="PRO_0000278726" description="Protein PB1-F2">
    <location>
        <begin position="1"/>
        <end position="90"/>
    </location>
</feature>
<feature type="region of interest" description="Disordered" evidence="2">
    <location>
        <begin position="1"/>
        <end position="31"/>
    </location>
</feature>
<feature type="region of interest" description="Mitochondrial targeting sequence" evidence="1">
    <location>
        <begin position="65"/>
        <end position="87"/>
    </location>
</feature>
<feature type="site" description="Low pathogenicity" evidence="1">
    <location>
        <position position="66"/>
    </location>
</feature>
<comment type="function">
    <text evidence="1">Plays an important role in promoting lung pathology in both primary viral infection and secondary bacterial infection. Promotes alteration of mitochondrial morphology, dissipation of mitochondrial membrane potential, and cell death. Alternatively, inhibits the production of interferon in the infected cell at the level of host mitochondrial antiviral signaling MAVS. Its level of expression differs greatly depending on which cell type is infected, in a manner that is independent of the levels of expression of other viral proteins. Monocytic cells are more affected than epithelial cells. Seems to disable virus-infected monocytes or other host innate immune cells. During early stage of infection, predisposes the mitochondria to permeability transition through interaction with host SLC25A6/ANT3 and VDAC1. These proteins participate in the formation of the permeability transition pore complex (PTPC) responsible of the release of mitochondrial products that triggers apoptosis.</text>
</comment>
<comment type="subunit">
    <text evidence="1">Oligomer. Interacts with human SLC25A6/ANT3 and VDAC1. Interacts with host MAVS.</text>
</comment>
<comment type="subcellular location">
    <subcellularLocation>
        <location evidence="1">Host mitochondrion inner membrane</location>
    </subcellularLocation>
    <subcellularLocation>
        <location evidence="1">Host nucleus</location>
    </subcellularLocation>
    <subcellularLocation>
        <location evidence="1">Host cytoplasm</location>
        <location evidence="1">Host cytosol</location>
    </subcellularLocation>
    <text evidence="1">Inner mitochondrial membrane in most cells types. Otherwise is detected in the nucleus and cytosol.</text>
</comment>
<comment type="miscellaneous">
    <text>Is not encoded in all strains, and seems to be dispensable for replication.</text>
</comment>
<comment type="similarity">
    <text evidence="1">Belongs to the influenza viruses PB1-F2 family.</text>
</comment>
<reference key="1">
    <citation type="journal article" date="2006" name="Science">
        <title>Large-scale sequence analysis of avian influenza isolates.</title>
        <authorList>
            <person name="Obenauer J.C."/>
            <person name="Denson J."/>
            <person name="Mehta P.K."/>
            <person name="Su X."/>
            <person name="Mukatira S."/>
            <person name="Finkelstein D.B."/>
            <person name="Xu X."/>
            <person name="Wang J."/>
            <person name="Ma J."/>
            <person name="Fan Y."/>
            <person name="Rakestraw K.M."/>
            <person name="Webster R.G."/>
            <person name="Hoffmann E."/>
            <person name="Krauss S."/>
            <person name="Zheng J."/>
            <person name="Zhang Z."/>
            <person name="Naeve C.W."/>
        </authorList>
    </citation>
    <scope>NUCLEOTIDE SEQUENCE [GENOMIC RNA]</scope>
</reference>
<evidence type="ECO:0000255" key="1">
    <source>
        <dbReference type="HAMAP-Rule" id="MF_04064"/>
    </source>
</evidence>
<evidence type="ECO:0000256" key="2">
    <source>
        <dbReference type="SAM" id="MobiDB-lite"/>
    </source>
</evidence>
<keyword id="KW-0053">Apoptosis</keyword>
<keyword id="KW-1035">Host cytoplasm</keyword>
<keyword id="KW-1043">Host membrane</keyword>
<keyword id="KW-1045">Host mitochondrion</keyword>
<keyword id="KW-1046">Host mitochondrion inner membrane</keyword>
<keyword id="KW-1048">Host nucleus</keyword>
<keyword id="KW-0945">Host-virus interaction</keyword>
<keyword id="KW-1090">Inhibition of host innate immune response by virus</keyword>
<keyword id="KW-1097">Inhibition of host MAVS by virus</keyword>
<keyword id="KW-1113">Inhibition of host RLR pathway by virus</keyword>
<keyword id="KW-0472">Membrane</keyword>
<keyword id="KW-1119">Modulation of host cell apoptosis by virus</keyword>
<keyword id="KW-0899">Viral immunoevasion</keyword>
<gene>
    <name evidence="1" type="primary">PB1</name>
</gene>
<name>PB1F2_I66A1</name>
<protein>
    <recommendedName>
        <fullName evidence="1">Protein PB1-F2</fullName>
    </recommendedName>
</protein>
<dbReference type="EMBL" id="CY014669">
    <property type="protein sequence ID" value="ABI84532.1"/>
    <property type="molecule type" value="Genomic_RNA"/>
</dbReference>
<dbReference type="SMR" id="Q0A450"/>
<dbReference type="GO" id="GO:0044164">
    <property type="term" value="C:host cell cytosol"/>
    <property type="evidence" value="ECO:0007669"/>
    <property type="project" value="UniProtKB-SubCell"/>
</dbReference>
<dbReference type="GO" id="GO:0044192">
    <property type="term" value="C:host cell mitochondrial inner membrane"/>
    <property type="evidence" value="ECO:0007669"/>
    <property type="project" value="UniProtKB-SubCell"/>
</dbReference>
<dbReference type="GO" id="GO:0042025">
    <property type="term" value="C:host cell nucleus"/>
    <property type="evidence" value="ECO:0007669"/>
    <property type="project" value="UniProtKB-SubCell"/>
</dbReference>
<dbReference type="GO" id="GO:0016020">
    <property type="term" value="C:membrane"/>
    <property type="evidence" value="ECO:0007669"/>
    <property type="project" value="UniProtKB-UniRule"/>
</dbReference>
<dbReference type="GO" id="GO:0052150">
    <property type="term" value="P:symbiont-mediated perturbation of host apoptosis"/>
    <property type="evidence" value="ECO:0007669"/>
    <property type="project" value="UniProtKB-KW"/>
</dbReference>
<dbReference type="GO" id="GO:0039545">
    <property type="term" value="P:symbiont-mediated suppression of host cytoplasmic pattern recognition receptor signaling pathway via inhibition of MAVS activity"/>
    <property type="evidence" value="ECO:0007669"/>
    <property type="project" value="UniProtKB-KW"/>
</dbReference>
<dbReference type="HAMAP" id="MF_04064">
    <property type="entry name" value="INFV_PB1F2"/>
    <property type="match status" value="1"/>
</dbReference>
<dbReference type="InterPro" id="IPR021045">
    <property type="entry name" value="Flu_proapoptotic_PB1-F2"/>
</dbReference>
<dbReference type="Pfam" id="PF11986">
    <property type="entry name" value="PB1-F2"/>
    <property type="match status" value="1"/>
</dbReference>